<name>YG61_YEAST</name>
<gene>
    <name type="ordered locus">YGR290W</name>
</gene>
<reference key="1">
    <citation type="journal article" date="1997" name="Yeast">
        <title>Sequence analysis of a near-subtelomeric 35.4 kb DNA segment on the right arm of chromosome VII from Saccharomyces cerevisiae carrying the MAL1 locus reveals 15 complete open reading frames, including ZUO1, BGL2 and BIO2 genes and an ABC transporter gene.</title>
        <authorList>
            <person name="Volckaert G."/>
            <person name="Voet M."/>
            <person name="Robben J."/>
        </authorList>
    </citation>
    <scope>NUCLEOTIDE SEQUENCE [GENOMIC DNA]</scope>
    <source>
        <strain>ATCC 96604 / S288c / FY1679</strain>
    </source>
</reference>
<reference key="2">
    <citation type="journal article" date="1997" name="Nature">
        <title>The nucleotide sequence of Saccharomyces cerevisiae chromosome VII.</title>
        <authorList>
            <person name="Tettelin H."/>
            <person name="Agostoni-Carbone M.L."/>
            <person name="Albermann K."/>
            <person name="Albers M."/>
            <person name="Arroyo J."/>
            <person name="Backes U."/>
            <person name="Barreiros T."/>
            <person name="Bertani I."/>
            <person name="Bjourson A.J."/>
            <person name="Brueckner M."/>
            <person name="Bruschi C.V."/>
            <person name="Carignani G."/>
            <person name="Castagnoli L."/>
            <person name="Cerdan E."/>
            <person name="Clemente M.L."/>
            <person name="Coblenz A."/>
            <person name="Coglievina M."/>
            <person name="Coissac E."/>
            <person name="Defoor E."/>
            <person name="Del Bino S."/>
            <person name="Delius H."/>
            <person name="Delneri D."/>
            <person name="de Wergifosse P."/>
            <person name="Dujon B."/>
            <person name="Durand P."/>
            <person name="Entian K.-D."/>
            <person name="Eraso P."/>
            <person name="Escribano V."/>
            <person name="Fabiani L."/>
            <person name="Fartmann B."/>
            <person name="Feroli F."/>
            <person name="Feuermann M."/>
            <person name="Frontali L."/>
            <person name="Garcia-Gonzalez M."/>
            <person name="Garcia-Saez M.I."/>
            <person name="Goffeau A."/>
            <person name="Guerreiro P."/>
            <person name="Hani J."/>
            <person name="Hansen M."/>
            <person name="Hebling U."/>
            <person name="Hernandez K."/>
            <person name="Heumann K."/>
            <person name="Hilger F."/>
            <person name="Hofmann B."/>
            <person name="Indge K.J."/>
            <person name="James C.M."/>
            <person name="Klima R."/>
            <person name="Koetter P."/>
            <person name="Kramer B."/>
            <person name="Kramer W."/>
            <person name="Lauquin G."/>
            <person name="Leuther H."/>
            <person name="Louis E.J."/>
            <person name="Maillier E."/>
            <person name="Marconi A."/>
            <person name="Martegani E."/>
            <person name="Mazon M.J."/>
            <person name="Mazzoni C."/>
            <person name="McReynolds A.D.K."/>
            <person name="Melchioretto P."/>
            <person name="Mewes H.-W."/>
            <person name="Minenkova O."/>
            <person name="Mueller-Auer S."/>
            <person name="Nawrocki A."/>
            <person name="Netter P."/>
            <person name="Neu R."/>
            <person name="Nombela C."/>
            <person name="Oliver S.G."/>
            <person name="Panzeri L."/>
            <person name="Paoluzi S."/>
            <person name="Plevani P."/>
            <person name="Portetelle D."/>
            <person name="Portillo F."/>
            <person name="Potier S."/>
            <person name="Purnelle B."/>
            <person name="Rieger M."/>
            <person name="Riles L."/>
            <person name="Rinaldi T."/>
            <person name="Robben J."/>
            <person name="Rodrigues-Pousada C."/>
            <person name="Rodriguez-Belmonte E."/>
            <person name="Rodriguez-Torres A.M."/>
            <person name="Rose M."/>
            <person name="Ruzzi M."/>
            <person name="Saliola M."/>
            <person name="Sanchez-Perez M."/>
            <person name="Schaefer B."/>
            <person name="Schaefer M."/>
            <person name="Scharfe M."/>
            <person name="Schmidheini T."/>
            <person name="Schreer A."/>
            <person name="Skala J."/>
            <person name="Souciet J.-L."/>
            <person name="Steensma H.Y."/>
            <person name="Talla E."/>
            <person name="Thierry A."/>
            <person name="Vandenbol M."/>
            <person name="van der Aart Q.J.M."/>
            <person name="Van Dyck L."/>
            <person name="Vanoni M."/>
            <person name="Verhasselt P."/>
            <person name="Voet M."/>
            <person name="Volckaert G."/>
            <person name="Wambutt R."/>
            <person name="Watson M.D."/>
            <person name="Weber N."/>
            <person name="Wedler E."/>
            <person name="Wedler H."/>
            <person name="Wipfli P."/>
            <person name="Wolf K."/>
            <person name="Wright L.F."/>
            <person name="Zaccaria P."/>
            <person name="Zimmermann M."/>
            <person name="Zollner A."/>
            <person name="Kleine K."/>
        </authorList>
    </citation>
    <scope>NUCLEOTIDE SEQUENCE [LARGE SCALE GENOMIC DNA]</scope>
    <source>
        <strain>ATCC 204508 / S288c</strain>
    </source>
</reference>
<reference key="3">
    <citation type="journal article" date="2014" name="G3 (Bethesda)">
        <title>The reference genome sequence of Saccharomyces cerevisiae: Then and now.</title>
        <authorList>
            <person name="Engel S.R."/>
            <person name="Dietrich F.S."/>
            <person name="Fisk D.G."/>
            <person name="Binkley G."/>
            <person name="Balakrishnan R."/>
            <person name="Costanzo M.C."/>
            <person name="Dwight S.S."/>
            <person name="Hitz B.C."/>
            <person name="Karra K."/>
            <person name="Nash R.S."/>
            <person name="Weng S."/>
            <person name="Wong E.D."/>
            <person name="Lloyd P."/>
            <person name="Skrzypek M.S."/>
            <person name="Miyasato S.R."/>
            <person name="Simison M."/>
            <person name="Cherry J.M."/>
        </authorList>
    </citation>
    <scope>GENOME REANNOTATION</scope>
    <source>
        <strain>ATCC 204508 / S288c</strain>
    </source>
</reference>
<reference key="4">
    <citation type="journal article" date="2007" name="Genome Res.">
        <title>Approaching a complete repository of sequence-verified protein-encoding clones for Saccharomyces cerevisiae.</title>
        <authorList>
            <person name="Hu Y."/>
            <person name="Rolfs A."/>
            <person name="Bhullar B."/>
            <person name="Murthy T.V.S."/>
            <person name="Zhu C."/>
            <person name="Berger M.F."/>
            <person name="Camargo A.A."/>
            <person name="Kelley F."/>
            <person name="McCarron S."/>
            <person name="Jepson D."/>
            <person name="Richardson A."/>
            <person name="Raphael J."/>
            <person name="Moreira D."/>
            <person name="Taycher E."/>
            <person name="Zuo D."/>
            <person name="Mohr S."/>
            <person name="Kane M.F."/>
            <person name="Williamson J."/>
            <person name="Simpson A.J.G."/>
            <person name="Bulyk M.L."/>
            <person name="Harlow E."/>
            <person name="Marsischky G."/>
            <person name="Kolodner R.D."/>
            <person name="LaBaer J."/>
        </authorList>
    </citation>
    <scope>NUCLEOTIDE SEQUENCE [GENOMIC DNA]</scope>
    <source>
        <strain>ATCC 204508 / S288c</strain>
    </source>
</reference>
<reference key="5">
    <citation type="journal article" date="2006" name="Proc. Natl. Acad. Sci. U.S.A.">
        <title>A global topology map of the Saccharomyces cerevisiae membrane proteome.</title>
        <authorList>
            <person name="Kim H."/>
            <person name="Melen K."/>
            <person name="Oesterberg M."/>
            <person name="von Heijne G."/>
        </authorList>
    </citation>
    <scope>TOPOLOGY [LARGE SCALE ANALYSIS]</scope>
    <source>
        <strain>ATCC 208353 / W303-1A</strain>
    </source>
</reference>
<feature type="chain" id="PRO_0000014323" description="Putative uncharacterized membrane protein YGR290W">
    <location>
        <begin position="1"/>
        <end position="147"/>
    </location>
</feature>
<feature type="topological domain" description="Extracellular" evidence="1">
    <location>
        <begin position="1"/>
        <end position="16"/>
    </location>
</feature>
<feature type="transmembrane region" description="Helical" evidence="1">
    <location>
        <begin position="17"/>
        <end position="37"/>
    </location>
</feature>
<feature type="topological domain" description="Cytoplasmic" evidence="1">
    <location>
        <begin position="38"/>
        <end position="105"/>
    </location>
</feature>
<feature type="transmembrane region" description="Helical" evidence="1">
    <location>
        <begin position="106"/>
        <end position="126"/>
    </location>
</feature>
<feature type="topological domain" description="Extracellular" evidence="1">
    <location>
        <begin position="127"/>
        <end position="147"/>
    </location>
</feature>
<sequence length="147" mass="16782">MDHRAAFGYFSNACFKVMLFSSLLASFASSVAFISLITFSLSSSESPNWAELVVNSKWSSSKALSFFPSSKSSVLKTSCWFTISLEDSEMFLSSFFEAAFFLLTNEMIFFILYYFFSCLMFFYVASERNTNPKILQTINTKPLYIKN</sequence>
<keyword id="KW-0472">Membrane</keyword>
<keyword id="KW-0812">Transmembrane</keyword>
<keyword id="KW-1133">Transmembrane helix</keyword>
<evidence type="ECO:0000255" key="1"/>
<evidence type="ECO:0000305" key="2"/>
<evidence type="ECO:0000305" key="3">
    <source>
    </source>
</evidence>
<comment type="subcellular location">
    <subcellularLocation>
        <location>Membrane</location>
        <topology>Multi-pass membrane protein</topology>
    </subcellularLocation>
</comment>
<comment type="miscellaneous">
    <text evidence="2">Partially overlaps MAL11.</text>
</comment>
<comment type="caution">
    <text evidence="3">Product of a dubious gene prediction unlikely to encode a functional protein. Because of that it is not part of the S.cerevisiae S288c complete/reference proteome set.</text>
</comment>
<proteinExistence type="uncertain"/>
<organism>
    <name type="scientific">Saccharomyces cerevisiae (strain ATCC 204508 / S288c)</name>
    <name type="common">Baker's yeast</name>
    <dbReference type="NCBI Taxonomy" id="559292"/>
    <lineage>
        <taxon>Eukaryota</taxon>
        <taxon>Fungi</taxon>
        <taxon>Dikarya</taxon>
        <taxon>Ascomycota</taxon>
        <taxon>Saccharomycotina</taxon>
        <taxon>Saccharomycetes</taxon>
        <taxon>Saccharomycetales</taxon>
        <taxon>Saccharomycetaceae</taxon>
        <taxon>Saccharomyces</taxon>
    </lineage>
</organism>
<dbReference type="EMBL" id="Z73074">
    <property type="protein sequence ID" value="CAA97323.1"/>
    <property type="molecule type" value="Genomic_DNA"/>
</dbReference>
<dbReference type="EMBL" id="AY693336">
    <property type="protein sequence ID" value="AAT93355.1"/>
    <property type="molecule type" value="Genomic_DNA"/>
</dbReference>
<dbReference type="PIR" id="S64625">
    <property type="entry name" value="S64625"/>
</dbReference>
<dbReference type="DIP" id="DIP-986N"/>
<dbReference type="IntAct" id="P53339">
    <property type="interactions" value="1"/>
</dbReference>
<dbReference type="STRING" id="4932.YGR290W"/>
<dbReference type="PaxDb" id="4932-YGR290W"/>
<dbReference type="EnsemblFungi" id="YGR290W_mRNA">
    <property type="protein sequence ID" value="YGR290W"/>
    <property type="gene ID" value="YGR290W"/>
</dbReference>
<dbReference type="AGR" id="SGD:S000003522"/>
<dbReference type="SGD" id="S000003522">
    <property type="gene designation" value="YGR290W"/>
</dbReference>
<dbReference type="HOGENOM" id="CLU_1769536_0_0_1"/>
<dbReference type="GO" id="GO:0016020">
    <property type="term" value="C:membrane"/>
    <property type="evidence" value="ECO:0000255"/>
    <property type="project" value="SGD"/>
</dbReference>
<protein>
    <recommendedName>
        <fullName>Putative uncharacterized membrane protein YGR290W</fullName>
    </recommendedName>
</protein>
<accession>P53339</accession>